<name>BIOB_GEOKA</name>
<organism>
    <name type="scientific">Geobacillus kaustophilus (strain HTA426)</name>
    <dbReference type="NCBI Taxonomy" id="235909"/>
    <lineage>
        <taxon>Bacteria</taxon>
        <taxon>Bacillati</taxon>
        <taxon>Bacillota</taxon>
        <taxon>Bacilli</taxon>
        <taxon>Bacillales</taxon>
        <taxon>Anoxybacillaceae</taxon>
        <taxon>Geobacillus</taxon>
        <taxon>Geobacillus thermoleovorans group</taxon>
    </lineage>
</organism>
<dbReference type="EC" id="2.8.1.6" evidence="1"/>
<dbReference type="EMBL" id="BA000043">
    <property type="protein sequence ID" value="BAD75855.1"/>
    <property type="molecule type" value="Genomic_DNA"/>
</dbReference>
<dbReference type="RefSeq" id="WP_011231066.1">
    <property type="nucleotide sequence ID" value="NC_006510.1"/>
</dbReference>
<dbReference type="SMR" id="Q5KZN1"/>
<dbReference type="STRING" id="235909.GK1570"/>
<dbReference type="KEGG" id="gka:GK1570"/>
<dbReference type="eggNOG" id="COG0502">
    <property type="taxonomic scope" value="Bacteria"/>
</dbReference>
<dbReference type="HOGENOM" id="CLU_033172_2_1_9"/>
<dbReference type="UniPathway" id="UPA00078">
    <property type="reaction ID" value="UER00162"/>
</dbReference>
<dbReference type="Proteomes" id="UP000001172">
    <property type="component" value="Chromosome"/>
</dbReference>
<dbReference type="GO" id="GO:0051537">
    <property type="term" value="F:2 iron, 2 sulfur cluster binding"/>
    <property type="evidence" value="ECO:0007669"/>
    <property type="project" value="UniProtKB-KW"/>
</dbReference>
<dbReference type="GO" id="GO:0051539">
    <property type="term" value="F:4 iron, 4 sulfur cluster binding"/>
    <property type="evidence" value="ECO:0007669"/>
    <property type="project" value="UniProtKB-KW"/>
</dbReference>
<dbReference type="GO" id="GO:0004076">
    <property type="term" value="F:biotin synthase activity"/>
    <property type="evidence" value="ECO:0007669"/>
    <property type="project" value="UniProtKB-UniRule"/>
</dbReference>
<dbReference type="GO" id="GO:0005506">
    <property type="term" value="F:iron ion binding"/>
    <property type="evidence" value="ECO:0007669"/>
    <property type="project" value="UniProtKB-UniRule"/>
</dbReference>
<dbReference type="GO" id="GO:0009102">
    <property type="term" value="P:biotin biosynthetic process"/>
    <property type="evidence" value="ECO:0007669"/>
    <property type="project" value="UniProtKB-UniRule"/>
</dbReference>
<dbReference type="CDD" id="cd01335">
    <property type="entry name" value="Radical_SAM"/>
    <property type="match status" value="1"/>
</dbReference>
<dbReference type="FunFam" id="3.20.20.70:FF:000026">
    <property type="entry name" value="Biotin synthase"/>
    <property type="match status" value="1"/>
</dbReference>
<dbReference type="Gene3D" id="3.20.20.70">
    <property type="entry name" value="Aldolase class I"/>
    <property type="match status" value="1"/>
</dbReference>
<dbReference type="HAMAP" id="MF_01694">
    <property type="entry name" value="BioB"/>
    <property type="match status" value="1"/>
</dbReference>
<dbReference type="InterPro" id="IPR013785">
    <property type="entry name" value="Aldolase_TIM"/>
</dbReference>
<dbReference type="InterPro" id="IPR010722">
    <property type="entry name" value="BATS_dom"/>
</dbReference>
<dbReference type="InterPro" id="IPR002684">
    <property type="entry name" value="Biotin_synth/BioAB"/>
</dbReference>
<dbReference type="InterPro" id="IPR024177">
    <property type="entry name" value="Biotin_synthase"/>
</dbReference>
<dbReference type="InterPro" id="IPR006638">
    <property type="entry name" value="Elp3/MiaA/NifB-like_rSAM"/>
</dbReference>
<dbReference type="InterPro" id="IPR007197">
    <property type="entry name" value="rSAM"/>
</dbReference>
<dbReference type="NCBIfam" id="TIGR00433">
    <property type="entry name" value="bioB"/>
    <property type="match status" value="1"/>
</dbReference>
<dbReference type="PANTHER" id="PTHR22976">
    <property type="entry name" value="BIOTIN SYNTHASE"/>
    <property type="match status" value="1"/>
</dbReference>
<dbReference type="PANTHER" id="PTHR22976:SF2">
    <property type="entry name" value="BIOTIN SYNTHASE, MITOCHONDRIAL"/>
    <property type="match status" value="1"/>
</dbReference>
<dbReference type="Pfam" id="PF06968">
    <property type="entry name" value="BATS"/>
    <property type="match status" value="1"/>
</dbReference>
<dbReference type="Pfam" id="PF04055">
    <property type="entry name" value="Radical_SAM"/>
    <property type="match status" value="1"/>
</dbReference>
<dbReference type="PIRSF" id="PIRSF001619">
    <property type="entry name" value="Biotin_synth"/>
    <property type="match status" value="1"/>
</dbReference>
<dbReference type="SFLD" id="SFLDG01278">
    <property type="entry name" value="biotin_synthase_like"/>
    <property type="match status" value="1"/>
</dbReference>
<dbReference type="SFLD" id="SFLDS00029">
    <property type="entry name" value="Radical_SAM"/>
    <property type="match status" value="1"/>
</dbReference>
<dbReference type="SMART" id="SM00876">
    <property type="entry name" value="BATS"/>
    <property type="match status" value="1"/>
</dbReference>
<dbReference type="SMART" id="SM00729">
    <property type="entry name" value="Elp3"/>
    <property type="match status" value="1"/>
</dbReference>
<dbReference type="SUPFAM" id="SSF102114">
    <property type="entry name" value="Radical SAM enzymes"/>
    <property type="match status" value="1"/>
</dbReference>
<dbReference type="PROSITE" id="PS51918">
    <property type="entry name" value="RADICAL_SAM"/>
    <property type="match status" value="1"/>
</dbReference>
<protein>
    <recommendedName>
        <fullName evidence="1">Biotin synthase</fullName>
        <ecNumber evidence="1">2.8.1.6</ecNumber>
    </recommendedName>
</protein>
<proteinExistence type="inferred from homology"/>
<evidence type="ECO:0000255" key="1">
    <source>
        <dbReference type="HAMAP-Rule" id="MF_01694"/>
    </source>
</evidence>
<evidence type="ECO:0000255" key="2">
    <source>
        <dbReference type="PROSITE-ProRule" id="PRU01266"/>
    </source>
</evidence>
<keyword id="KW-0001">2Fe-2S</keyword>
<keyword id="KW-0004">4Fe-4S</keyword>
<keyword id="KW-0093">Biotin biosynthesis</keyword>
<keyword id="KW-0408">Iron</keyword>
<keyword id="KW-0411">Iron-sulfur</keyword>
<keyword id="KW-0479">Metal-binding</keyword>
<keyword id="KW-1185">Reference proteome</keyword>
<keyword id="KW-0949">S-adenosyl-L-methionine</keyword>
<keyword id="KW-0808">Transferase</keyword>
<gene>
    <name evidence="1" type="primary">bioB</name>
    <name type="ordered locus">GK1570</name>
</gene>
<reference key="1">
    <citation type="journal article" date="2004" name="Nucleic Acids Res.">
        <title>Thermoadaptation trait revealed by the genome sequence of thermophilic Geobacillus kaustophilus.</title>
        <authorList>
            <person name="Takami H."/>
            <person name="Takaki Y."/>
            <person name="Chee G.-J."/>
            <person name="Nishi S."/>
            <person name="Shimamura S."/>
            <person name="Suzuki H."/>
            <person name="Matsui S."/>
            <person name="Uchiyama I."/>
        </authorList>
    </citation>
    <scope>NUCLEOTIDE SEQUENCE [LARGE SCALE GENOMIC DNA]</scope>
    <source>
        <strain>HTA426</strain>
    </source>
</reference>
<sequence>MANWLVLAEQVLGGHELTDEEALAILDCPDEELLLLLQGAYRIRSAYYGNKVKLNMIINAKSGLCPENCGYCSQSAVSTAPVKTYKMVDKETLLRGAEEAHRLRIGTYCIVASGRGPSDKEIDTVVSAVKEIKERFGLKVCACLGILKPEQAARLKEAGVDRYNHNINTSKQHHPNITTSHTYDDRVRTVETVKEAGLSPCSGVIIGMKETKRDVVDMARSLRALDADSIPVNFLHAIDGTPLAGTNELNPRYCLKVLALFRYMNPTKEIRIAGGREVNLRSLQPLGLYAANSIFVGDYLTTAGQEKSADYQMLEDLGFEIEFAPAPQAGVVS</sequence>
<comment type="function">
    <text evidence="1">Catalyzes the conversion of dethiobiotin (DTB) to biotin by the insertion of a sulfur atom into dethiobiotin via a radical-based mechanism.</text>
</comment>
<comment type="catalytic activity">
    <reaction evidence="1">
        <text>(4R,5S)-dethiobiotin + (sulfur carrier)-SH + 2 reduced [2Fe-2S]-[ferredoxin] + 2 S-adenosyl-L-methionine = (sulfur carrier)-H + biotin + 2 5'-deoxyadenosine + 2 L-methionine + 2 oxidized [2Fe-2S]-[ferredoxin]</text>
        <dbReference type="Rhea" id="RHEA:22060"/>
        <dbReference type="Rhea" id="RHEA-COMP:10000"/>
        <dbReference type="Rhea" id="RHEA-COMP:10001"/>
        <dbReference type="Rhea" id="RHEA-COMP:14737"/>
        <dbReference type="Rhea" id="RHEA-COMP:14739"/>
        <dbReference type="ChEBI" id="CHEBI:17319"/>
        <dbReference type="ChEBI" id="CHEBI:29917"/>
        <dbReference type="ChEBI" id="CHEBI:33737"/>
        <dbReference type="ChEBI" id="CHEBI:33738"/>
        <dbReference type="ChEBI" id="CHEBI:57586"/>
        <dbReference type="ChEBI" id="CHEBI:57844"/>
        <dbReference type="ChEBI" id="CHEBI:59789"/>
        <dbReference type="ChEBI" id="CHEBI:64428"/>
        <dbReference type="ChEBI" id="CHEBI:149473"/>
        <dbReference type="EC" id="2.8.1.6"/>
    </reaction>
</comment>
<comment type="cofactor">
    <cofactor evidence="1">
        <name>[4Fe-4S] cluster</name>
        <dbReference type="ChEBI" id="CHEBI:49883"/>
    </cofactor>
    <text evidence="1">Binds 1 [4Fe-4S] cluster. The cluster is coordinated with 3 cysteines and an exchangeable S-adenosyl-L-methionine.</text>
</comment>
<comment type="cofactor">
    <cofactor evidence="1">
        <name>[2Fe-2S] cluster</name>
        <dbReference type="ChEBI" id="CHEBI:190135"/>
    </cofactor>
    <text evidence="1">Binds 1 [2Fe-2S] cluster. The cluster is coordinated with 3 cysteines and 1 arginine.</text>
</comment>
<comment type="pathway">
    <text evidence="1">Cofactor biosynthesis; biotin biosynthesis; biotin from 7,8-diaminononanoate: step 2/2.</text>
</comment>
<comment type="subunit">
    <text evidence="1">Homodimer.</text>
</comment>
<comment type="similarity">
    <text evidence="1">Belongs to the radical SAM superfamily. Biotin synthase family.</text>
</comment>
<accession>Q5KZN1</accession>
<feature type="chain" id="PRO_0000381401" description="Biotin synthase">
    <location>
        <begin position="1"/>
        <end position="333"/>
    </location>
</feature>
<feature type="domain" description="Radical SAM core" evidence="2">
    <location>
        <begin position="47"/>
        <end position="273"/>
    </location>
</feature>
<feature type="binding site" evidence="1">
    <location>
        <position position="65"/>
    </location>
    <ligand>
        <name>[4Fe-4S] cluster</name>
        <dbReference type="ChEBI" id="CHEBI:49883"/>
        <note>4Fe-4S-S-AdoMet</note>
    </ligand>
</feature>
<feature type="binding site" evidence="1">
    <location>
        <position position="69"/>
    </location>
    <ligand>
        <name>[4Fe-4S] cluster</name>
        <dbReference type="ChEBI" id="CHEBI:49883"/>
        <note>4Fe-4S-S-AdoMet</note>
    </ligand>
</feature>
<feature type="binding site" evidence="1">
    <location>
        <position position="72"/>
    </location>
    <ligand>
        <name>[4Fe-4S] cluster</name>
        <dbReference type="ChEBI" id="CHEBI:49883"/>
        <note>4Fe-4S-S-AdoMet</note>
    </ligand>
</feature>
<feature type="binding site" evidence="1">
    <location>
        <position position="109"/>
    </location>
    <ligand>
        <name>[2Fe-2S] cluster</name>
        <dbReference type="ChEBI" id="CHEBI:190135"/>
    </ligand>
</feature>
<feature type="binding site" evidence="1">
    <location>
        <position position="141"/>
    </location>
    <ligand>
        <name>[2Fe-2S] cluster</name>
        <dbReference type="ChEBI" id="CHEBI:190135"/>
    </ligand>
</feature>
<feature type="binding site" evidence="1">
    <location>
        <position position="201"/>
    </location>
    <ligand>
        <name>[2Fe-2S] cluster</name>
        <dbReference type="ChEBI" id="CHEBI:190135"/>
    </ligand>
</feature>
<feature type="binding site" evidence="1">
    <location>
        <position position="271"/>
    </location>
    <ligand>
        <name>[2Fe-2S] cluster</name>
        <dbReference type="ChEBI" id="CHEBI:190135"/>
    </ligand>
</feature>